<gene>
    <name type="ordered locus">BpOF4_11355</name>
</gene>
<feature type="chain" id="PRO_0000388281" description="UPF0754 protein BpOF4_11355">
    <location>
        <begin position="1"/>
        <end position="379"/>
    </location>
</feature>
<feature type="transmembrane region" description="Helical" evidence="2">
    <location>
        <begin position="6"/>
        <end position="26"/>
    </location>
</feature>
<feature type="transmembrane region" description="Helical" evidence="2">
    <location>
        <begin position="359"/>
        <end position="379"/>
    </location>
</feature>
<comment type="subcellular location">
    <subcellularLocation>
        <location evidence="1">Cell membrane</location>
        <topology evidence="1">Multi-pass membrane protein</topology>
    </subcellularLocation>
</comment>
<comment type="similarity">
    <text evidence="3">Belongs to the UPF0754 family.</text>
</comment>
<comment type="sequence caution" evidence="3">
    <conflict type="erroneous initiation">
        <sequence resource="EMBL-CDS" id="AAC62416"/>
    </conflict>
    <text>Truncated N-terminus.</text>
</comment>
<protein>
    <recommendedName>
        <fullName>UPF0754 protein BpOF4_11355</fullName>
    </recommendedName>
</protein>
<keyword id="KW-1003">Cell membrane</keyword>
<keyword id="KW-0472">Membrane</keyword>
<keyword id="KW-1185">Reference proteome</keyword>
<keyword id="KW-0812">Transmembrane</keyword>
<keyword id="KW-1133">Transmembrane helix</keyword>
<dbReference type="EMBL" id="AF084104">
    <property type="protein sequence ID" value="AAC62416.1"/>
    <property type="status" value="ALT_INIT"/>
    <property type="molecule type" value="Genomic_DNA"/>
</dbReference>
<dbReference type="EMBL" id="CP001878">
    <property type="protein sequence ID" value="ADC50324.1"/>
    <property type="molecule type" value="Genomic_DNA"/>
</dbReference>
<dbReference type="RefSeq" id="WP_012957690.1">
    <property type="nucleotide sequence ID" value="NC_013791.2"/>
</dbReference>
<dbReference type="SMR" id="O87557"/>
<dbReference type="STRING" id="398511.BpOF4_11355"/>
<dbReference type="KEGG" id="bpf:BpOF4_11355"/>
<dbReference type="eggNOG" id="COG4399">
    <property type="taxonomic scope" value="Bacteria"/>
</dbReference>
<dbReference type="HOGENOM" id="CLU_042384_0_0_9"/>
<dbReference type="Proteomes" id="UP000001544">
    <property type="component" value="Chromosome"/>
</dbReference>
<dbReference type="GO" id="GO:0005886">
    <property type="term" value="C:plasma membrane"/>
    <property type="evidence" value="ECO:0007669"/>
    <property type="project" value="UniProtKB-SubCell"/>
</dbReference>
<dbReference type="InterPro" id="IPR007383">
    <property type="entry name" value="DUF445"/>
</dbReference>
<dbReference type="InterPro" id="IPR016991">
    <property type="entry name" value="UCP032178"/>
</dbReference>
<dbReference type="PANTHER" id="PTHR35791">
    <property type="entry name" value="UPF0754 MEMBRANE PROTEIN YHEB"/>
    <property type="match status" value="1"/>
</dbReference>
<dbReference type="PANTHER" id="PTHR35791:SF1">
    <property type="entry name" value="UPF0754 MEMBRANE PROTEIN YHEB"/>
    <property type="match status" value="1"/>
</dbReference>
<dbReference type="Pfam" id="PF04286">
    <property type="entry name" value="DUF445"/>
    <property type="match status" value="1"/>
</dbReference>
<dbReference type="PIRSF" id="PIRSF032178">
    <property type="entry name" value="UCP032178"/>
    <property type="match status" value="1"/>
</dbReference>
<reference key="1">
    <citation type="journal article" date="1999" name="Extremophiles">
        <title>Sequence analysis and functional studies of a chromosomal region of alkaliphilic Bacillus firmus OF4 encoding an ABC-type transporter with similarity of sequence and Na+ exclusion capacity to the Bacillus subtilis NatAB transporter.</title>
        <authorList>
            <person name="Wei Y."/>
            <person name="Guffanti A.A."/>
            <person name="Krulwich T.A."/>
        </authorList>
    </citation>
    <scope>NUCLEOTIDE SEQUENCE [GENOMIC DNA]</scope>
</reference>
<reference key="2">
    <citation type="journal article" date="2011" name="Environ. Microbiol.">
        <title>Genome of alkaliphilic Bacillus pseudofirmus OF4 reveals adaptations that support the ability to grow in an external pH range from 7.5 to 11.4.</title>
        <authorList>
            <person name="Janto B."/>
            <person name="Ahmed A."/>
            <person name="Ito M."/>
            <person name="Liu J."/>
            <person name="Hicks D.B."/>
            <person name="Pagni S."/>
            <person name="Fackelmayer O.J."/>
            <person name="Smith T.A."/>
            <person name="Earl J."/>
            <person name="Elbourne L.D."/>
            <person name="Hassan K."/>
            <person name="Paulsen I.T."/>
            <person name="Kolsto A.B."/>
            <person name="Tourasse N.J."/>
            <person name="Ehrlich G.D."/>
            <person name="Boissy R."/>
            <person name="Ivey D.M."/>
            <person name="Li G."/>
            <person name="Xue Y."/>
            <person name="Ma Y."/>
            <person name="Hu F.Z."/>
            <person name="Krulwich T.A."/>
        </authorList>
    </citation>
    <scope>NUCLEOTIDE SEQUENCE [LARGE SCALE GENOMIC DNA]</scope>
    <source>
        <strain>ATCC BAA-2126 / JCM 17055 / OF4</strain>
    </source>
</reference>
<organism>
    <name type="scientific">Alkalihalophilus pseudofirmus (strain ATCC BAA-2126 / JCM 17055 / OF4)</name>
    <name type="common">Bacillus pseudofirmus</name>
    <dbReference type="NCBI Taxonomy" id="398511"/>
    <lineage>
        <taxon>Bacteria</taxon>
        <taxon>Bacillati</taxon>
        <taxon>Bacillota</taxon>
        <taxon>Bacilli</taxon>
        <taxon>Bacillales</taxon>
        <taxon>Bacillaceae</taxon>
        <taxon>Alkalihalophilus</taxon>
    </lineage>
</organism>
<sequence length="379" mass="43465">MDTAWFIGFMVVIGAVIGGATNSLAIKMLFRPYTEKRIGKWRVPFTPGLIPKRHQELAIQLGHMVVHYLLTAEGLGKKLKSAVFMKAMNDWLSTELLKLLRSELTIGELLEDKLGVKEPKQTLLQKTEGLIEKSYDRFFQENRYKQIGEVLPRGVNEKIDHSVPVIAAFLLERGQALFSSEEGKERLSKMIDRFLLNKGTLGNMISMFLGNERLVDKLQPELMKFMRDDGTKRMVEEILEKEWAKLKQKDVALIEDQLNKEDIVEYMTTALEKNVTFYQWVDQPLCDWSEPFEDMLVINWVPKLVDAVSDLLALHLEGLLEKLNLEDIVREQVEAFSVERLEELVLTISKREFKMITYLGALLGGMIGFIQGLLVLFIG</sequence>
<evidence type="ECO:0000250" key="1"/>
<evidence type="ECO:0000255" key="2"/>
<evidence type="ECO:0000305" key="3"/>
<proteinExistence type="inferred from homology"/>
<name>Y2271_ALKPO</name>
<accession>O87557</accession>
<accession>D3FVC3</accession>